<name>RS5_VIBCH</name>
<accession>Q9KP01</accession>
<reference key="1">
    <citation type="journal article" date="2000" name="Nature">
        <title>DNA sequence of both chromosomes of the cholera pathogen Vibrio cholerae.</title>
        <authorList>
            <person name="Heidelberg J.F."/>
            <person name="Eisen J.A."/>
            <person name="Nelson W.C."/>
            <person name="Clayton R.A."/>
            <person name="Gwinn M.L."/>
            <person name="Dodson R.J."/>
            <person name="Haft D.H."/>
            <person name="Hickey E.K."/>
            <person name="Peterson J.D."/>
            <person name="Umayam L.A."/>
            <person name="Gill S.R."/>
            <person name="Nelson K.E."/>
            <person name="Read T.D."/>
            <person name="Tettelin H."/>
            <person name="Richardson D.L."/>
            <person name="Ermolaeva M.D."/>
            <person name="Vamathevan J.J."/>
            <person name="Bass S."/>
            <person name="Qin H."/>
            <person name="Dragoi I."/>
            <person name="Sellers P."/>
            <person name="McDonald L.A."/>
            <person name="Utterback T.R."/>
            <person name="Fleischmann R.D."/>
            <person name="Nierman W.C."/>
            <person name="White O."/>
            <person name="Salzberg S.L."/>
            <person name="Smith H.O."/>
            <person name="Colwell R.R."/>
            <person name="Mekalanos J.J."/>
            <person name="Venter J.C."/>
            <person name="Fraser C.M."/>
        </authorList>
    </citation>
    <scope>NUCLEOTIDE SEQUENCE [LARGE SCALE GENOMIC DNA]</scope>
    <source>
        <strain>ATCC 39315 / El Tor Inaba N16961</strain>
    </source>
</reference>
<comment type="function">
    <text evidence="1">With S4 and S12 plays an important role in translational accuracy.</text>
</comment>
<comment type="function">
    <text evidence="1">Located at the back of the 30S subunit body where it stabilizes the conformation of the head with respect to the body.</text>
</comment>
<comment type="subunit">
    <text evidence="1">Part of the 30S ribosomal subunit. Contacts proteins S4 and S8.</text>
</comment>
<comment type="domain">
    <text>The N-terminal domain interacts with the head of the 30S subunit; the C-terminal domain interacts with the body and contacts protein S4. The interaction surface between S4 and S5 is involved in control of translational fidelity.</text>
</comment>
<comment type="similarity">
    <text evidence="1">Belongs to the universal ribosomal protein uS5 family.</text>
</comment>
<sequence length="167" mass="17576">MAKEQQVQANDLQEKLIAVNRVSKTVKGGRIMSFTALTVVGDGNGRVGFGYGKAREVPAAIQKAMEKARRSMVTIALNEGTLHHPVKGRHSGSKVYMQPAAEGTGVIAGGAMRAVLEVAGVHNVLSKAYGSTNPINIVRATIDALVDVKSPEMVAAKRGLTVEAISE</sequence>
<organism>
    <name type="scientific">Vibrio cholerae serotype O1 (strain ATCC 39315 / El Tor Inaba N16961)</name>
    <dbReference type="NCBI Taxonomy" id="243277"/>
    <lineage>
        <taxon>Bacteria</taxon>
        <taxon>Pseudomonadati</taxon>
        <taxon>Pseudomonadota</taxon>
        <taxon>Gammaproteobacteria</taxon>
        <taxon>Vibrionales</taxon>
        <taxon>Vibrionaceae</taxon>
        <taxon>Vibrio</taxon>
    </lineage>
</organism>
<keyword id="KW-1185">Reference proteome</keyword>
<keyword id="KW-0687">Ribonucleoprotein</keyword>
<keyword id="KW-0689">Ribosomal protein</keyword>
<keyword id="KW-0694">RNA-binding</keyword>
<keyword id="KW-0699">rRNA-binding</keyword>
<gene>
    <name evidence="1" type="primary">rpsE</name>
    <name type="ordered locus">VC_2579</name>
</gene>
<proteinExistence type="inferred from homology"/>
<evidence type="ECO:0000255" key="1">
    <source>
        <dbReference type="HAMAP-Rule" id="MF_01307"/>
    </source>
</evidence>
<evidence type="ECO:0000305" key="2"/>
<feature type="chain" id="PRO_0000131627" description="Small ribosomal subunit protein uS5">
    <location>
        <begin position="1"/>
        <end position="167"/>
    </location>
</feature>
<feature type="domain" description="S5 DRBM" evidence="1">
    <location>
        <begin position="12"/>
        <end position="75"/>
    </location>
</feature>
<protein>
    <recommendedName>
        <fullName evidence="1">Small ribosomal subunit protein uS5</fullName>
    </recommendedName>
    <alternativeName>
        <fullName evidence="2">30S ribosomal protein S5</fullName>
    </alternativeName>
</protein>
<dbReference type="EMBL" id="AE003852">
    <property type="protein sequence ID" value="AAF95720.1"/>
    <property type="molecule type" value="Genomic_DNA"/>
</dbReference>
<dbReference type="PIR" id="E82057">
    <property type="entry name" value="E82057"/>
</dbReference>
<dbReference type="RefSeq" id="NP_232207.1">
    <property type="nucleotide sequence ID" value="NC_002505.1"/>
</dbReference>
<dbReference type="RefSeq" id="WP_001040926.1">
    <property type="nucleotide sequence ID" value="NZ_LT906614.1"/>
</dbReference>
<dbReference type="SMR" id="Q9KP01"/>
<dbReference type="STRING" id="243277.VC_2579"/>
<dbReference type="DNASU" id="2615596"/>
<dbReference type="EnsemblBacteria" id="AAF95720">
    <property type="protein sequence ID" value="AAF95720"/>
    <property type="gene ID" value="VC_2579"/>
</dbReference>
<dbReference type="GeneID" id="94012769"/>
<dbReference type="KEGG" id="vch:VC_2579"/>
<dbReference type="PATRIC" id="fig|243277.26.peg.2458"/>
<dbReference type="eggNOG" id="COG0098">
    <property type="taxonomic scope" value="Bacteria"/>
</dbReference>
<dbReference type="HOGENOM" id="CLU_065898_2_2_6"/>
<dbReference type="Proteomes" id="UP000000584">
    <property type="component" value="Chromosome 1"/>
</dbReference>
<dbReference type="GO" id="GO:0022627">
    <property type="term" value="C:cytosolic small ribosomal subunit"/>
    <property type="evidence" value="ECO:0000318"/>
    <property type="project" value="GO_Central"/>
</dbReference>
<dbReference type="GO" id="GO:0019843">
    <property type="term" value="F:rRNA binding"/>
    <property type="evidence" value="ECO:0007669"/>
    <property type="project" value="UniProtKB-UniRule"/>
</dbReference>
<dbReference type="GO" id="GO:0003735">
    <property type="term" value="F:structural constituent of ribosome"/>
    <property type="evidence" value="ECO:0000318"/>
    <property type="project" value="GO_Central"/>
</dbReference>
<dbReference type="GO" id="GO:0006412">
    <property type="term" value="P:translation"/>
    <property type="evidence" value="ECO:0000318"/>
    <property type="project" value="GO_Central"/>
</dbReference>
<dbReference type="FunFam" id="3.30.160.20:FF:000001">
    <property type="entry name" value="30S ribosomal protein S5"/>
    <property type="match status" value="1"/>
</dbReference>
<dbReference type="FunFam" id="3.30.230.10:FF:000002">
    <property type="entry name" value="30S ribosomal protein S5"/>
    <property type="match status" value="1"/>
</dbReference>
<dbReference type="Gene3D" id="3.30.160.20">
    <property type="match status" value="1"/>
</dbReference>
<dbReference type="Gene3D" id="3.30.230.10">
    <property type="match status" value="1"/>
</dbReference>
<dbReference type="HAMAP" id="MF_01307_B">
    <property type="entry name" value="Ribosomal_uS5_B"/>
    <property type="match status" value="1"/>
</dbReference>
<dbReference type="InterPro" id="IPR020568">
    <property type="entry name" value="Ribosomal_Su5_D2-typ_SF"/>
</dbReference>
<dbReference type="InterPro" id="IPR000851">
    <property type="entry name" value="Ribosomal_uS5"/>
</dbReference>
<dbReference type="InterPro" id="IPR005712">
    <property type="entry name" value="Ribosomal_uS5_bac-type"/>
</dbReference>
<dbReference type="InterPro" id="IPR005324">
    <property type="entry name" value="Ribosomal_uS5_C"/>
</dbReference>
<dbReference type="InterPro" id="IPR013810">
    <property type="entry name" value="Ribosomal_uS5_N"/>
</dbReference>
<dbReference type="InterPro" id="IPR018192">
    <property type="entry name" value="Ribosomal_uS5_N_CS"/>
</dbReference>
<dbReference type="InterPro" id="IPR014721">
    <property type="entry name" value="Ribsml_uS5_D2-typ_fold_subgr"/>
</dbReference>
<dbReference type="NCBIfam" id="TIGR01021">
    <property type="entry name" value="rpsE_bact"/>
    <property type="match status" value="1"/>
</dbReference>
<dbReference type="PANTHER" id="PTHR48277">
    <property type="entry name" value="MITOCHONDRIAL RIBOSOMAL PROTEIN S5"/>
    <property type="match status" value="1"/>
</dbReference>
<dbReference type="PANTHER" id="PTHR48277:SF1">
    <property type="entry name" value="MITOCHONDRIAL RIBOSOMAL PROTEIN S5"/>
    <property type="match status" value="1"/>
</dbReference>
<dbReference type="Pfam" id="PF00333">
    <property type="entry name" value="Ribosomal_S5"/>
    <property type="match status" value="1"/>
</dbReference>
<dbReference type="Pfam" id="PF03719">
    <property type="entry name" value="Ribosomal_S5_C"/>
    <property type="match status" value="1"/>
</dbReference>
<dbReference type="SUPFAM" id="SSF54768">
    <property type="entry name" value="dsRNA-binding domain-like"/>
    <property type="match status" value="1"/>
</dbReference>
<dbReference type="SUPFAM" id="SSF54211">
    <property type="entry name" value="Ribosomal protein S5 domain 2-like"/>
    <property type="match status" value="1"/>
</dbReference>
<dbReference type="PROSITE" id="PS00585">
    <property type="entry name" value="RIBOSOMAL_S5"/>
    <property type="match status" value="1"/>
</dbReference>
<dbReference type="PROSITE" id="PS50881">
    <property type="entry name" value="S5_DSRBD"/>
    <property type="match status" value="1"/>
</dbReference>